<comment type="function">
    <text evidence="1">Promotes tail assembly by creating a scaffold for the tail tube proteins. The tail assembly proteins Gp24 and Gp25 would wrap the linear tape measure protein to create a tail assembly scaffold. It would allow polymerization of tail tube protein during which Gp24 and Gp25 are released and therefore are absent from the mature virion. The tail assembly protein Gp25 is produced by a rare -1 ribosomal frameshift. The ratio Gp24/Gp25 is important for proper tail assembly.</text>
</comment>
<comment type="subunit">
    <text evidence="1">Interacts with tail assembly protein Gp24 and tape measure protein.</text>
</comment>
<comment type="alternative products">
    <event type="ribosomal frameshifting"/>
    <isoform>
        <id>O64219-1</id>
        <name>Tail assembly protein Gp25</name>
        <sequence type="displayed"/>
    </isoform>
    <isoform>
        <id>O64218-1</id>
        <name>Tail assembly protein Gp24</name>
        <sequence type="external"/>
    </isoform>
</comment>
<comment type="miscellaneous">
    <molecule>Isoform Tail assembly protein Gp25</molecule>
    <text>Produced by -1 ribosomal frameshifting.</text>
</comment>
<comment type="similarity">
    <text evidence="4">Belongs to the L5likevirus tail assembly protein family.</text>
</comment>
<feature type="chain" id="PRO_0000164738" description="Tail assembly protein Gp25">
    <location>
        <begin position="1"/>
        <end position="274"/>
    </location>
</feature>
<feature type="region of interest" description="Disordered" evidence="3">
    <location>
        <begin position="221"/>
        <end position="250"/>
    </location>
</feature>
<feature type="compositionally biased region" description="Basic and acidic residues" evidence="3">
    <location>
        <begin position="236"/>
        <end position="245"/>
    </location>
</feature>
<gene>
    <name type="primary">25</name>
</gene>
<evidence type="ECO:0000250" key="1">
    <source>
        <dbReference type="UniProtKB" id="P03734"/>
    </source>
</evidence>
<evidence type="ECO:0000250" key="2">
    <source>
        <dbReference type="UniProtKB" id="Q05232"/>
    </source>
</evidence>
<evidence type="ECO:0000256" key="3">
    <source>
        <dbReference type="SAM" id="MobiDB-lite"/>
    </source>
</evidence>
<evidence type="ECO:0000305" key="4"/>
<organism>
    <name type="scientific">Mycobacterium phage D29</name>
    <name type="common">Mycobacteriophage D29</name>
    <dbReference type="NCBI Taxonomy" id="28369"/>
    <lineage>
        <taxon>Viruses</taxon>
        <taxon>Duplodnaviria</taxon>
        <taxon>Heunggongvirae</taxon>
        <taxon>Uroviricota</taxon>
        <taxon>Caudoviricetes</taxon>
        <taxon>Fromanvirus</taxon>
    </lineage>
</organism>
<reference key="1">
    <citation type="journal article" date="1998" name="J. Mol. Biol.">
        <title>Genome structure of mycobacteriophage D29: implications for phage evolution.</title>
        <authorList>
            <person name="Ford M.E."/>
            <person name="Sarkis G.J."/>
            <person name="Belanger A.E."/>
            <person name="Hendrix R.W."/>
            <person name="Hatfull G.F."/>
        </authorList>
    </citation>
    <scope>NUCLEOTIDE SEQUENCE [LARGE SCALE GENOMIC DNA]</scope>
</reference>
<reference key="2">
    <citation type="submission" date="2021-06" db="EMBL/GenBank/DDBJ databases">
        <authorList>
            <person name="Ford M.E."/>
            <person name="Sarkis G.J."/>
            <person name="Belanger A.E."/>
            <person name="Hendrix R.W."/>
            <person name="Hatfull G.F."/>
        </authorList>
    </citation>
    <scope>SEQUENCE REVISION TO N-TERMINUS</scope>
</reference>
<organismHost>
    <name type="scientific">Mycobacterium</name>
    <dbReference type="NCBI Taxonomy" id="1763"/>
</organismHost>
<proteinExistence type="inferred from homology"/>
<name>TAP25_BPMD2</name>
<sequence length="274" mass="31102">MTNVFTIDAFREEVKKKYEPVTIGISEDVTVELKPLLKLGQKAREAVVEAVKEVEDIPDIDEDDEEAEELVDEYSLRICEIVAKVFRLIATKPKKLIAALDEEEDPRIRAELYATVLRTWMVETQLGESRALAELIDKFGGAILSDLSEYHGVDLRDLFRDEDPLSPRYVLNLVIHLPKTGAFYAERRGGQQYRGWDEDRYALADIYDAVQAGNHILLMANRDPKKPKPKAPKAYPRPDDFEKTTPKPGSFAAMVVAAKKAAREKREREEANAE</sequence>
<keyword id="KW-1185">Reference proteome</keyword>
<keyword id="KW-0688">Ribosomal frameshifting</keyword>
<keyword id="KW-1188">Viral release from host cell</keyword>
<keyword id="KW-1245">Viral tail assembly</keyword>
<dbReference type="EMBL" id="AF022214">
    <property type="protein sequence ID" value="AAC18466.2"/>
    <property type="molecule type" value="Genomic_DNA"/>
</dbReference>
<dbReference type="PIR" id="G72802">
    <property type="entry name" value="G72802"/>
</dbReference>
<dbReference type="RefSeq" id="NP_046841.1">
    <property type="nucleotide sequence ID" value="NC_001900.1"/>
</dbReference>
<dbReference type="SMR" id="O64219"/>
<dbReference type="GeneID" id="1261587"/>
<dbReference type="KEGG" id="vg:1261587"/>
<dbReference type="OrthoDB" id="25353at10239"/>
<dbReference type="Proteomes" id="UP000002131">
    <property type="component" value="Segment"/>
</dbReference>
<dbReference type="GO" id="GO:0098003">
    <property type="term" value="P:viral tail assembly"/>
    <property type="evidence" value="ECO:0007669"/>
    <property type="project" value="UniProtKB-KW"/>
</dbReference>
<dbReference type="GO" id="GO:0075523">
    <property type="term" value="P:viral translational frameshifting"/>
    <property type="evidence" value="ECO:0007669"/>
    <property type="project" value="UniProtKB-KW"/>
</dbReference>
<dbReference type="InterPro" id="IPR020132">
    <property type="entry name" value="Gp24/Gp25"/>
</dbReference>
<dbReference type="Pfam" id="PF17388">
    <property type="entry name" value="GP24_25"/>
    <property type="match status" value="1"/>
</dbReference>
<accession>O64219</accession>
<protein>
    <recommendedName>
        <fullName evidence="2">Tail assembly protein Gp25</fullName>
    </recommendedName>
    <alternativeName>
        <fullName>Gene 25 protein</fullName>
    </alternativeName>
    <alternativeName>
        <fullName>Gp25</fullName>
    </alternativeName>
</protein>